<gene>
    <name type="primary">cdu1</name>
    <name type="ordered locus">CTA_0948</name>
</gene>
<dbReference type="EC" id="3.4.22.-"/>
<dbReference type="EMBL" id="CP000051">
    <property type="protein sequence ID" value="AAX51154.1"/>
    <property type="molecule type" value="Genomic_DNA"/>
</dbReference>
<dbReference type="RefSeq" id="WP_011324911.1">
    <property type="nucleotide sequence ID" value="NC_007429.1"/>
</dbReference>
<dbReference type="SMR" id="Q3KKG8"/>
<dbReference type="MEROPS" id="C48.032"/>
<dbReference type="KEGG" id="cta:CTA_0948"/>
<dbReference type="HOGENOM" id="CLU_067510_0_0_0"/>
<dbReference type="Proteomes" id="UP000002532">
    <property type="component" value="Chromosome"/>
</dbReference>
<dbReference type="GO" id="GO:0005576">
    <property type="term" value="C:extracellular region"/>
    <property type="evidence" value="ECO:0000250"/>
    <property type="project" value="UniProtKB"/>
</dbReference>
<dbReference type="GO" id="GO:0043657">
    <property type="term" value="C:host cell"/>
    <property type="evidence" value="ECO:0007669"/>
    <property type="project" value="UniProtKB-SubCell"/>
</dbReference>
<dbReference type="GO" id="GO:0016020">
    <property type="term" value="C:membrane"/>
    <property type="evidence" value="ECO:0007669"/>
    <property type="project" value="UniProtKB-SubCell"/>
</dbReference>
<dbReference type="GO" id="GO:0004843">
    <property type="term" value="F:cysteine-type deubiquitinase activity"/>
    <property type="evidence" value="ECO:0000250"/>
    <property type="project" value="UniProtKB"/>
</dbReference>
<dbReference type="GO" id="GO:0019784">
    <property type="term" value="F:deNEDDylase activity"/>
    <property type="evidence" value="ECO:0000250"/>
    <property type="project" value="UniProtKB"/>
</dbReference>
<dbReference type="GO" id="GO:0000338">
    <property type="term" value="P:protein deneddylation"/>
    <property type="evidence" value="ECO:0000250"/>
    <property type="project" value="UniProtKB"/>
</dbReference>
<dbReference type="GO" id="GO:0016579">
    <property type="term" value="P:protein deubiquitination"/>
    <property type="evidence" value="ECO:0000250"/>
    <property type="project" value="UniProtKB"/>
</dbReference>
<dbReference type="GO" id="GO:0006508">
    <property type="term" value="P:proteolysis"/>
    <property type="evidence" value="ECO:0007669"/>
    <property type="project" value="UniProtKB-KW"/>
</dbReference>
<dbReference type="FunFam" id="3.40.395.10:FF:000016">
    <property type="entry name" value="Deubiquitinase and deneddylase Dub1"/>
    <property type="match status" value="1"/>
</dbReference>
<dbReference type="Gene3D" id="3.40.395.10">
    <property type="entry name" value="Adenoviral Proteinase, Chain A"/>
    <property type="match status" value="1"/>
</dbReference>
<dbReference type="InterPro" id="IPR038765">
    <property type="entry name" value="Papain-like_cys_pep_sf"/>
</dbReference>
<dbReference type="InterPro" id="IPR003653">
    <property type="entry name" value="Peptidase_C48_C"/>
</dbReference>
<dbReference type="Pfam" id="PF02902">
    <property type="entry name" value="Peptidase_C48"/>
    <property type="match status" value="1"/>
</dbReference>
<dbReference type="PRINTS" id="PR01217">
    <property type="entry name" value="PRICHEXTENSN"/>
</dbReference>
<dbReference type="SUPFAM" id="SSF54001">
    <property type="entry name" value="Cysteine proteinases"/>
    <property type="match status" value="1"/>
</dbReference>
<sequence length="418" mass="46657">MLSPTNSISKTVPAPPQDSSKPVLISEEPQNQLLQKVARTALAVLLVVVTLGLILLFYSFSDLQSFPWCCQTRPSTKEHPTISIPEPLPSPPLAVPRPSTPPPPVISRPSTPPAPTPAISPPSTPSAPKPSTPPPLPPKAPKPVKTQEDLLPFVPEQVFVEMYEDMARRQIIEALVPAWDSDIIFKCLCYFHTLYQGLIPLETFPPATIFNFKQKIISILEDKKAVLRGEPIKGSLPICCSEENYRRHLQGTTLLPVFMWYHPTPKTLSDTMQTMKQLAIKGSVGASHWLLVIVDIQARRLVYFDSLYNYVMSPEDMKKDLQSFAQQLDQVYPACDSQKFSVKIAAKEVIQKGSGSSCGAWCCQFLHWYLRDPFTDALNDLPVDSVERHENLASFVRACEAAVQDLPELFWPEAKALF</sequence>
<accession>Q3KKG8</accession>
<comment type="function">
    <text evidence="1">Effector proteins function to alter host cell physiology and promote bacterial survival in host tissues. This protease possesses deubiquitinating and deneddylating activities (By similarity).</text>
</comment>
<comment type="subcellular location">
    <subcellularLocation>
        <location evidence="1">Secreted</location>
    </subcellularLocation>
    <subcellularLocation>
        <location evidence="1">Host cell</location>
    </subcellularLocation>
    <subcellularLocation>
        <location evidence="1">Membrane</location>
        <topology evidence="1">Single-pass membrane protein</topology>
    </subcellularLocation>
    <text evidence="1">Secreted, and delivered into the host cell.</text>
</comment>
<comment type="similarity">
    <text evidence="4">Belongs to the peptidase C48 family.</text>
</comment>
<keyword id="KW-0378">Hydrolase</keyword>
<keyword id="KW-0472">Membrane</keyword>
<keyword id="KW-0645">Protease</keyword>
<keyword id="KW-0964">Secreted</keyword>
<keyword id="KW-0788">Thiol protease</keyword>
<keyword id="KW-0812">Transmembrane</keyword>
<keyword id="KW-1133">Transmembrane helix</keyword>
<keyword id="KW-0833">Ubl conjugation pathway</keyword>
<keyword id="KW-0843">Virulence</keyword>
<proteinExistence type="inferred from homology"/>
<feature type="chain" id="PRO_0000396490" description="Deubiquitinase and deneddylase Dub1">
    <location>
        <begin position="1"/>
        <end position="418"/>
    </location>
</feature>
<feature type="transmembrane region" description="Helical" evidence="2">
    <location>
        <begin position="40"/>
        <end position="60"/>
    </location>
</feature>
<feature type="region of interest" description="Disordered" evidence="3">
    <location>
        <begin position="1"/>
        <end position="23"/>
    </location>
</feature>
<feature type="region of interest" description="Disordered" evidence="3">
    <location>
        <begin position="75"/>
        <end position="145"/>
    </location>
</feature>
<feature type="compositionally biased region" description="Polar residues" evidence="3">
    <location>
        <begin position="1"/>
        <end position="10"/>
    </location>
</feature>
<feature type="compositionally biased region" description="Pro residues" evidence="3">
    <location>
        <begin position="86"/>
        <end position="141"/>
    </location>
</feature>
<feature type="active site" evidence="2">
    <location>
        <position position="288"/>
    </location>
</feature>
<feature type="active site" evidence="2">
    <location>
        <position position="305"/>
    </location>
</feature>
<feature type="active site" evidence="2">
    <location>
        <position position="358"/>
    </location>
</feature>
<evidence type="ECO:0000250" key="1"/>
<evidence type="ECO:0000255" key="2"/>
<evidence type="ECO:0000256" key="3">
    <source>
        <dbReference type="SAM" id="MobiDB-lite"/>
    </source>
</evidence>
<evidence type="ECO:0000305" key="4"/>
<reference key="1">
    <citation type="journal article" date="2005" name="Infect. Immun.">
        <title>Comparative genomic analysis of Chlamydia trachomatis oculotropic and genitotropic strains.</title>
        <authorList>
            <person name="Carlson J.H."/>
            <person name="Porcella S.F."/>
            <person name="McClarty G."/>
            <person name="Caldwell H.D."/>
        </authorList>
    </citation>
    <scope>NUCLEOTIDE SEQUENCE [LARGE SCALE GENOMIC DNA]</scope>
    <source>
        <strain>ATCC VR-571B / DSM 19440 / HAR-13</strain>
    </source>
</reference>
<protein>
    <recommendedName>
        <fullName>Deubiquitinase and deneddylase Dub1</fullName>
        <shortName>ChlaDub1</shortName>
        <ecNumber>3.4.22.-</ecNumber>
    </recommendedName>
</protein>
<organism>
    <name type="scientific">Chlamydia trachomatis serovar A (strain ATCC VR-571B / DSM 19440 / HAR-13)</name>
    <dbReference type="NCBI Taxonomy" id="315277"/>
    <lineage>
        <taxon>Bacteria</taxon>
        <taxon>Pseudomonadati</taxon>
        <taxon>Chlamydiota</taxon>
        <taxon>Chlamydiia</taxon>
        <taxon>Chlamydiales</taxon>
        <taxon>Chlamydiaceae</taxon>
        <taxon>Chlamydia/Chlamydophila group</taxon>
        <taxon>Chlamydia</taxon>
    </lineage>
</organism>
<name>CDUB1_CHLTA</name>